<protein>
    <recommendedName>
        <fullName evidence="1">Serine--tRNA ligase</fullName>
        <ecNumber evidence="1">6.1.1.11</ecNumber>
    </recommendedName>
    <alternativeName>
        <fullName evidence="1">Seryl-tRNA synthetase</fullName>
        <shortName evidence="1">SerRS</shortName>
    </alternativeName>
    <alternativeName>
        <fullName evidence="1">Seryl-tRNA(Ser/Sec) synthetase</fullName>
    </alternativeName>
</protein>
<proteinExistence type="inferred from homology"/>
<keyword id="KW-0030">Aminoacyl-tRNA synthetase</keyword>
<keyword id="KW-0067">ATP-binding</keyword>
<keyword id="KW-0963">Cytoplasm</keyword>
<keyword id="KW-0436">Ligase</keyword>
<keyword id="KW-0547">Nucleotide-binding</keyword>
<keyword id="KW-0648">Protein biosynthesis</keyword>
<keyword id="KW-1185">Reference proteome</keyword>
<accession>A0KJE8</accession>
<organism>
    <name type="scientific">Aeromonas hydrophila subsp. hydrophila (strain ATCC 7966 / DSM 30187 / BCRC 13018 / CCUG 14551 / JCM 1027 / KCTC 2358 / NCIMB 9240 / NCTC 8049)</name>
    <dbReference type="NCBI Taxonomy" id="380703"/>
    <lineage>
        <taxon>Bacteria</taxon>
        <taxon>Pseudomonadati</taxon>
        <taxon>Pseudomonadota</taxon>
        <taxon>Gammaproteobacteria</taxon>
        <taxon>Aeromonadales</taxon>
        <taxon>Aeromonadaceae</taxon>
        <taxon>Aeromonas</taxon>
    </lineage>
</organism>
<gene>
    <name evidence="1" type="primary">serS</name>
    <name type="ordered locus">AHA_1868</name>
</gene>
<name>SYS_AERHH</name>
<sequence length="431" mass="48058">MLDPKYLRSDIAEAAARLATRGYVLDVAAVNALEEKRKDLQSRTQELQAERNARSKSIGEAARRGEDVAPLKAEVTKINEELETSKVELDALLAELKVIADAIPNLPSDTTPVGRDENDNVEVRRWGTPREFSFPVRDHIDLGEAAKGVDFKNGVKLSGSRFVVMKGQIARLHRALAQFMLDLHTLQHGYTECYVPYLVNPDSLYGTGQLPKFSQDLFNTGIDGEGEEEGKVRKFSLIPTSEVPLTNMARDEIFDEQELPIKMTAHSPCFRSEAGSYGRDTRGLIRMHQFDKVEMVQLVHPEKSWEALEEMAGHAEKVLQLLELPYRVMALSTGDMGFCAAKTYDLEVWLPAQNTYREISSVSNCTDFQARRMQARVRIDGKPQLLHTLNGSGLAVGRTLVAVIENYQQEDGRIAIPAALQSYMGGLTHIG</sequence>
<reference key="1">
    <citation type="journal article" date="2006" name="J. Bacteriol.">
        <title>Genome sequence of Aeromonas hydrophila ATCC 7966T: jack of all trades.</title>
        <authorList>
            <person name="Seshadri R."/>
            <person name="Joseph S.W."/>
            <person name="Chopra A.K."/>
            <person name="Sha J."/>
            <person name="Shaw J."/>
            <person name="Graf J."/>
            <person name="Haft D.H."/>
            <person name="Wu M."/>
            <person name="Ren Q."/>
            <person name="Rosovitz M.J."/>
            <person name="Madupu R."/>
            <person name="Tallon L."/>
            <person name="Kim M."/>
            <person name="Jin S."/>
            <person name="Vuong H."/>
            <person name="Stine O.C."/>
            <person name="Ali A."/>
            <person name="Horneman A.J."/>
            <person name="Heidelberg J.F."/>
        </authorList>
    </citation>
    <scope>NUCLEOTIDE SEQUENCE [LARGE SCALE GENOMIC DNA]</scope>
    <source>
        <strain>ATCC 7966 / DSM 30187 / BCRC 13018 / CCUG 14551 / JCM 1027 / KCTC 2358 / NCIMB 9240 / NCTC 8049</strain>
    </source>
</reference>
<feature type="chain" id="PRO_1000019604" description="Serine--tRNA ligase">
    <location>
        <begin position="1"/>
        <end position="431"/>
    </location>
</feature>
<feature type="region of interest" description="Disordered" evidence="2">
    <location>
        <begin position="41"/>
        <end position="66"/>
    </location>
</feature>
<feature type="binding site" evidence="1">
    <location>
        <begin position="240"/>
        <end position="242"/>
    </location>
    <ligand>
        <name>L-serine</name>
        <dbReference type="ChEBI" id="CHEBI:33384"/>
    </ligand>
</feature>
<feature type="binding site" evidence="1">
    <location>
        <begin position="271"/>
        <end position="273"/>
    </location>
    <ligand>
        <name>ATP</name>
        <dbReference type="ChEBI" id="CHEBI:30616"/>
    </ligand>
</feature>
<feature type="binding site" evidence="1">
    <location>
        <position position="294"/>
    </location>
    <ligand>
        <name>L-serine</name>
        <dbReference type="ChEBI" id="CHEBI:33384"/>
    </ligand>
</feature>
<feature type="binding site" evidence="1">
    <location>
        <begin position="358"/>
        <end position="361"/>
    </location>
    <ligand>
        <name>ATP</name>
        <dbReference type="ChEBI" id="CHEBI:30616"/>
    </ligand>
</feature>
<feature type="binding site" evidence="1">
    <location>
        <position position="392"/>
    </location>
    <ligand>
        <name>L-serine</name>
        <dbReference type="ChEBI" id="CHEBI:33384"/>
    </ligand>
</feature>
<comment type="function">
    <text evidence="1">Catalyzes the attachment of serine to tRNA(Ser). Is also able to aminoacylate tRNA(Sec) with serine, to form the misacylated tRNA L-seryl-tRNA(Sec), which will be further converted into selenocysteinyl-tRNA(Sec).</text>
</comment>
<comment type="catalytic activity">
    <reaction evidence="1">
        <text>tRNA(Ser) + L-serine + ATP = L-seryl-tRNA(Ser) + AMP + diphosphate + H(+)</text>
        <dbReference type="Rhea" id="RHEA:12292"/>
        <dbReference type="Rhea" id="RHEA-COMP:9669"/>
        <dbReference type="Rhea" id="RHEA-COMP:9703"/>
        <dbReference type="ChEBI" id="CHEBI:15378"/>
        <dbReference type="ChEBI" id="CHEBI:30616"/>
        <dbReference type="ChEBI" id="CHEBI:33019"/>
        <dbReference type="ChEBI" id="CHEBI:33384"/>
        <dbReference type="ChEBI" id="CHEBI:78442"/>
        <dbReference type="ChEBI" id="CHEBI:78533"/>
        <dbReference type="ChEBI" id="CHEBI:456215"/>
        <dbReference type="EC" id="6.1.1.11"/>
    </reaction>
</comment>
<comment type="catalytic activity">
    <reaction evidence="1">
        <text>tRNA(Sec) + L-serine + ATP = L-seryl-tRNA(Sec) + AMP + diphosphate + H(+)</text>
        <dbReference type="Rhea" id="RHEA:42580"/>
        <dbReference type="Rhea" id="RHEA-COMP:9742"/>
        <dbReference type="Rhea" id="RHEA-COMP:10128"/>
        <dbReference type="ChEBI" id="CHEBI:15378"/>
        <dbReference type="ChEBI" id="CHEBI:30616"/>
        <dbReference type="ChEBI" id="CHEBI:33019"/>
        <dbReference type="ChEBI" id="CHEBI:33384"/>
        <dbReference type="ChEBI" id="CHEBI:78442"/>
        <dbReference type="ChEBI" id="CHEBI:78533"/>
        <dbReference type="ChEBI" id="CHEBI:456215"/>
        <dbReference type="EC" id="6.1.1.11"/>
    </reaction>
</comment>
<comment type="pathway">
    <text evidence="1">Aminoacyl-tRNA biosynthesis; selenocysteinyl-tRNA(Sec) biosynthesis; L-seryl-tRNA(Sec) from L-serine and tRNA(Sec): step 1/1.</text>
</comment>
<comment type="subunit">
    <text evidence="1">Homodimer. The tRNA molecule binds across the dimer.</text>
</comment>
<comment type="subcellular location">
    <subcellularLocation>
        <location evidence="1">Cytoplasm</location>
    </subcellularLocation>
</comment>
<comment type="domain">
    <text evidence="1">Consists of two distinct domains, a catalytic core and a N-terminal extension that is involved in tRNA binding.</text>
</comment>
<comment type="similarity">
    <text evidence="1">Belongs to the class-II aminoacyl-tRNA synthetase family. Type-1 seryl-tRNA synthetase subfamily.</text>
</comment>
<dbReference type="EC" id="6.1.1.11" evidence="1"/>
<dbReference type="EMBL" id="CP000462">
    <property type="protein sequence ID" value="ABK37688.1"/>
    <property type="molecule type" value="Genomic_DNA"/>
</dbReference>
<dbReference type="RefSeq" id="WP_011705744.1">
    <property type="nucleotide sequence ID" value="NC_008570.1"/>
</dbReference>
<dbReference type="RefSeq" id="YP_856399.1">
    <property type="nucleotide sequence ID" value="NC_008570.1"/>
</dbReference>
<dbReference type="SMR" id="A0KJE8"/>
<dbReference type="STRING" id="380703.AHA_1868"/>
<dbReference type="EnsemblBacteria" id="ABK37688">
    <property type="protein sequence ID" value="ABK37688"/>
    <property type="gene ID" value="AHA_1868"/>
</dbReference>
<dbReference type="GeneID" id="4488968"/>
<dbReference type="KEGG" id="aha:AHA_1868"/>
<dbReference type="PATRIC" id="fig|380703.7.peg.1879"/>
<dbReference type="eggNOG" id="COG0172">
    <property type="taxonomic scope" value="Bacteria"/>
</dbReference>
<dbReference type="HOGENOM" id="CLU_023797_1_1_6"/>
<dbReference type="OrthoDB" id="9804647at2"/>
<dbReference type="UniPathway" id="UPA00906">
    <property type="reaction ID" value="UER00895"/>
</dbReference>
<dbReference type="Proteomes" id="UP000000756">
    <property type="component" value="Chromosome"/>
</dbReference>
<dbReference type="GO" id="GO:0005737">
    <property type="term" value="C:cytoplasm"/>
    <property type="evidence" value="ECO:0007669"/>
    <property type="project" value="UniProtKB-SubCell"/>
</dbReference>
<dbReference type="GO" id="GO:0005524">
    <property type="term" value="F:ATP binding"/>
    <property type="evidence" value="ECO:0007669"/>
    <property type="project" value="UniProtKB-UniRule"/>
</dbReference>
<dbReference type="GO" id="GO:0004828">
    <property type="term" value="F:serine-tRNA ligase activity"/>
    <property type="evidence" value="ECO:0007669"/>
    <property type="project" value="UniProtKB-UniRule"/>
</dbReference>
<dbReference type="GO" id="GO:0016260">
    <property type="term" value="P:selenocysteine biosynthetic process"/>
    <property type="evidence" value="ECO:0007669"/>
    <property type="project" value="UniProtKB-UniRule"/>
</dbReference>
<dbReference type="GO" id="GO:0006434">
    <property type="term" value="P:seryl-tRNA aminoacylation"/>
    <property type="evidence" value="ECO:0007669"/>
    <property type="project" value="UniProtKB-UniRule"/>
</dbReference>
<dbReference type="CDD" id="cd00770">
    <property type="entry name" value="SerRS_core"/>
    <property type="match status" value="1"/>
</dbReference>
<dbReference type="Gene3D" id="3.30.930.10">
    <property type="entry name" value="Bira Bifunctional Protein, Domain 2"/>
    <property type="match status" value="1"/>
</dbReference>
<dbReference type="Gene3D" id="1.10.287.40">
    <property type="entry name" value="Serine-tRNA synthetase, tRNA binding domain"/>
    <property type="match status" value="1"/>
</dbReference>
<dbReference type="HAMAP" id="MF_00176">
    <property type="entry name" value="Ser_tRNA_synth_type1"/>
    <property type="match status" value="1"/>
</dbReference>
<dbReference type="InterPro" id="IPR002314">
    <property type="entry name" value="aa-tRNA-synt_IIb"/>
</dbReference>
<dbReference type="InterPro" id="IPR006195">
    <property type="entry name" value="aa-tRNA-synth_II"/>
</dbReference>
<dbReference type="InterPro" id="IPR045864">
    <property type="entry name" value="aa-tRNA-synth_II/BPL/LPL"/>
</dbReference>
<dbReference type="InterPro" id="IPR002317">
    <property type="entry name" value="Ser-tRNA-ligase_type_1"/>
</dbReference>
<dbReference type="InterPro" id="IPR015866">
    <property type="entry name" value="Ser-tRNA-synth_1_N"/>
</dbReference>
<dbReference type="InterPro" id="IPR042103">
    <property type="entry name" value="SerRS_1_N_sf"/>
</dbReference>
<dbReference type="InterPro" id="IPR033729">
    <property type="entry name" value="SerRS_core"/>
</dbReference>
<dbReference type="InterPro" id="IPR010978">
    <property type="entry name" value="tRNA-bd_arm"/>
</dbReference>
<dbReference type="NCBIfam" id="TIGR00414">
    <property type="entry name" value="serS"/>
    <property type="match status" value="1"/>
</dbReference>
<dbReference type="PANTHER" id="PTHR43697:SF1">
    <property type="entry name" value="SERINE--TRNA LIGASE"/>
    <property type="match status" value="1"/>
</dbReference>
<dbReference type="PANTHER" id="PTHR43697">
    <property type="entry name" value="SERYL-TRNA SYNTHETASE"/>
    <property type="match status" value="1"/>
</dbReference>
<dbReference type="Pfam" id="PF02403">
    <property type="entry name" value="Seryl_tRNA_N"/>
    <property type="match status" value="1"/>
</dbReference>
<dbReference type="Pfam" id="PF00587">
    <property type="entry name" value="tRNA-synt_2b"/>
    <property type="match status" value="1"/>
</dbReference>
<dbReference type="PIRSF" id="PIRSF001529">
    <property type="entry name" value="Ser-tRNA-synth_IIa"/>
    <property type="match status" value="1"/>
</dbReference>
<dbReference type="PRINTS" id="PR00981">
    <property type="entry name" value="TRNASYNTHSER"/>
</dbReference>
<dbReference type="SUPFAM" id="SSF55681">
    <property type="entry name" value="Class II aaRS and biotin synthetases"/>
    <property type="match status" value="1"/>
</dbReference>
<dbReference type="SUPFAM" id="SSF46589">
    <property type="entry name" value="tRNA-binding arm"/>
    <property type="match status" value="1"/>
</dbReference>
<dbReference type="PROSITE" id="PS50862">
    <property type="entry name" value="AA_TRNA_LIGASE_II"/>
    <property type="match status" value="1"/>
</dbReference>
<evidence type="ECO:0000255" key="1">
    <source>
        <dbReference type="HAMAP-Rule" id="MF_00176"/>
    </source>
</evidence>
<evidence type="ECO:0000256" key="2">
    <source>
        <dbReference type="SAM" id="MobiDB-lite"/>
    </source>
</evidence>